<gene>
    <name type="primary">UGT79B7</name>
    <name type="ordered locus">At4g09500</name>
    <name type="ORF">T15G18.80</name>
</gene>
<evidence type="ECO:0000250" key="1"/>
<evidence type="ECO:0000303" key="2">
    <source>
    </source>
</evidence>
<evidence type="ECO:0000305" key="3"/>
<comment type="alternative products">
    <event type="alternative splicing"/>
    <isoform>
        <id>Q9M0P3-1</id>
        <name>1</name>
        <sequence type="displayed"/>
    </isoform>
    <isoform>
        <id>Q9M0P3-2</id>
        <name>2</name>
        <sequence type="described" ref="VSP_041228"/>
    </isoform>
</comment>
<comment type="similarity">
    <text evidence="3">Belongs to the UDP-glycosyltransferase family.</text>
</comment>
<name>U79B7_ARATH</name>
<keyword id="KW-0025">Alternative splicing</keyword>
<keyword id="KW-0328">Glycosyltransferase</keyword>
<keyword id="KW-1185">Reference proteome</keyword>
<keyword id="KW-0808">Transferase</keyword>
<reference key="1">
    <citation type="journal article" date="1999" name="Nature">
        <title>Sequence and analysis of chromosome 4 of the plant Arabidopsis thaliana.</title>
        <authorList>
            <person name="Mayer K.F.X."/>
            <person name="Schueller C."/>
            <person name="Wambutt R."/>
            <person name="Murphy G."/>
            <person name="Volckaert G."/>
            <person name="Pohl T."/>
            <person name="Duesterhoeft A."/>
            <person name="Stiekema W."/>
            <person name="Entian K.-D."/>
            <person name="Terryn N."/>
            <person name="Harris B."/>
            <person name="Ansorge W."/>
            <person name="Brandt P."/>
            <person name="Grivell L.A."/>
            <person name="Rieger M."/>
            <person name="Weichselgartner M."/>
            <person name="de Simone V."/>
            <person name="Obermaier B."/>
            <person name="Mache R."/>
            <person name="Mueller M."/>
            <person name="Kreis M."/>
            <person name="Delseny M."/>
            <person name="Puigdomenech P."/>
            <person name="Watson M."/>
            <person name="Schmidtheini T."/>
            <person name="Reichert B."/>
            <person name="Portetelle D."/>
            <person name="Perez-Alonso M."/>
            <person name="Boutry M."/>
            <person name="Bancroft I."/>
            <person name="Vos P."/>
            <person name="Hoheisel J."/>
            <person name="Zimmermann W."/>
            <person name="Wedler H."/>
            <person name="Ridley P."/>
            <person name="Langham S.-A."/>
            <person name="McCullagh B."/>
            <person name="Bilham L."/>
            <person name="Robben J."/>
            <person name="van der Schueren J."/>
            <person name="Grymonprez B."/>
            <person name="Chuang Y.-J."/>
            <person name="Vandenbussche F."/>
            <person name="Braeken M."/>
            <person name="Weltjens I."/>
            <person name="Voet M."/>
            <person name="Bastiaens I."/>
            <person name="Aert R."/>
            <person name="Defoor E."/>
            <person name="Weitzenegger T."/>
            <person name="Bothe G."/>
            <person name="Ramsperger U."/>
            <person name="Hilbert H."/>
            <person name="Braun M."/>
            <person name="Holzer E."/>
            <person name="Brandt A."/>
            <person name="Peters S."/>
            <person name="van Staveren M."/>
            <person name="Dirkse W."/>
            <person name="Mooijman P."/>
            <person name="Klein Lankhorst R."/>
            <person name="Rose M."/>
            <person name="Hauf J."/>
            <person name="Koetter P."/>
            <person name="Berneiser S."/>
            <person name="Hempel S."/>
            <person name="Feldpausch M."/>
            <person name="Lamberth S."/>
            <person name="Van den Daele H."/>
            <person name="De Keyser A."/>
            <person name="Buysshaert C."/>
            <person name="Gielen J."/>
            <person name="Villarroel R."/>
            <person name="De Clercq R."/>
            <person name="van Montagu M."/>
            <person name="Rogers J."/>
            <person name="Cronin A."/>
            <person name="Quail M.A."/>
            <person name="Bray-Allen S."/>
            <person name="Clark L."/>
            <person name="Doggett J."/>
            <person name="Hall S."/>
            <person name="Kay M."/>
            <person name="Lennard N."/>
            <person name="McLay K."/>
            <person name="Mayes R."/>
            <person name="Pettett A."/>
            <person name="Rajandream M.A."/>
            <person name="Lyne M."/>
            <person name="Benes V."/>
            <person name="Rechmann S."/>
            <person name="Borkova D."/>
            <person name="Bloecker H."/>
            <person name="Scharfe M."/>
            <person name="Grimm M."/>
            <person name="Loehnert T.-H."/>
            <person name="Dose S."/>
            <person name="de Haan M."/>
            <person name="Maarse A.C."/>
            <person name="Schaefer M."/>
            <person name="Mueller-Auer S."/>
            <person name="Gabel C."/>
            <person name="Fuchs M."/>
            <person name="Fartmann B."/>
            <person name="Granderath K."/>
            <person name="Dauner D."/>
            <person name="Herzl A."/>
            <person name="Neumann S."/>
            <person name="Argiriou A."/>
            <person name="Vitale D."/>
            <person name="Liguori R."/>
            <person name="Piravandi E."/>
            <person name="Massenet O."/>
            <person name="Quigley F."/>
            <person name="Clabauld G."/>
            <person name="Muendlein A."/>
            <person name="Felber R."/>
            <person name="Schnabl S."/>
            <person name="Hiller R."/>
            <person name="Schmidt W."/>
            <person name="Lecharny A."/>
            <person name="Aubourg S."/>
            <person name="Chefdor F."/>
            <person name="Cooke R."/>
            <person name="Berger C."/>
            <person name="Monfort A."/>
            <person name="Casacuberta E."/>
            <person name="Gibbons T."/>
            <person name="Weber N."/>
            <person name="Vandenbol M."/>
            <person name="Bargues M."/>
            <person name="Terol J."/>
            <person name="Torres A."/>
            <person name="Perez-Perez A."/>
            <person name="Purnelle B."/>
            <person name="Bent E."/>
            <person name="Johnson S."/>
            <person name="Tacon D."/>
            <person name="Jesse T."/>
            <person name="Heijnen L."/>
            <person name="Schwarz S."/>
            <person name="Scholler P."/>
            <person name="Heber S."/>
            <person name="Francs P."/>
            <person name="Bielke C."/>
            <person name="Frishman D."/>
            <person name="Haase D."/>
            <person name="Lemcke K."/>
            <person name="Mewes H.-W."/>
            <person name="Stocker S."/>
            <person name="Zaccaria P."/>
            <person name="Bevan M."/>
            <person name="Wilson R.K."/>
            <person name="de la Bastide M."/>
            <person name="Habermann K."/>
            <person name="Parnell L."/>
            <person name="Dedhia N."/>
            <person name="Gnoj L."/>
            <person name="Schutz K."/>
            <person name="Huang E."/>
            <person name="Spiegel L."/>
            <person name="Sekhon M."/>
            <person name="Murray J."/>
            <person name="Sheet P."/>
            <person name="Cordes M."/>
            <person name="Abu-Threideh J."/>
            <person name="Stoneking T."/>
            <person name="Kalicki J."/>
            <person name="Graves T."/>
            <person name="Harmon G."/>
            <person name="Edwards J."/>
            <person name="Latreille P."/>
            <person name="Courtney L."/>
            <person name="Cloud J."/>
            <person name="Abbott A."/>
            <person name="Scott K."/>
            <person name="Johnson D."/>
            <person name="Minx P."/>
            <person name="Bentley D."/>
            <person name="Fulton B."/>
            <person name="Miller N."/>
            <person name="Greco T."/>
            <person name="Kemp K."/>
            <person name="Kramer J."/>
            <person name="Fulton L."/>
            <person name="Mardis E."/>
            <person name="Dante M."/>
            <person name="Pepin K."/>
            <person name="Hillier L.W."/>
            <person name="Nelson J."/>
            <person name="Spieth J."/>
            <person name="Ryan E."/>
            <person name="Andrews S."/>
            <person name="Geisel C."/>
            <person name="Layman D."/>
            <person name="Du H."/>
            <person name="Ali J."/>
            <person name="Berghoff A."/>
            <person name="Jones K."/>
            <person name="Drone K."/>
            <person name="Cotton M."/>
            <person name="Joshu C."/>
            <person name="Antonoiu B."/>
            <person name="Zidanic M."/>
            <person name="Strong C."/>
            <person name="Sun H."/>
            <person name="Lamar B."/>
            <person name="Yordan C."/>
            <person name="Ma P."/>
            <person name="Zhong J."/>
            <person name="Preston R."/>
            <person name="Vil D."/>
            <person name="Shekher M."/>
            <person name="Matero A."/>
            <person name="Shah R."/>
            <person name="Swaby I.K."/>
            <person name="O'Shaughnessy A."/>
            <person name="Rodriguez M."/>
            <person name="Hoffman J."/>
            <person name="Till S."/>
            <person name="Granat S."/>
            <person name="Shohdy N."/>
            <person name="Hasegawa A."/>
            <person name="Hameed A."/>
            <person name="Lodhi M."/>
            <person name="Johnson A."/>
            <person name="Chen E."/>
            <person name="Marra M.A."/>
            <person name="Martienssen R."/>
            <person name="McCombie W.R."/>
        </authorList>
    </citation>
    <scope>NUCLEOTIDE SEQUENCE [LARGE SCALE GENOMIC DNA]</scope>
    <source>
        <strain>cv. Columbia</strain>
    </source>
</reference>
<reference key="2">
    <citation type="journal article" date="2017" name="Plant J.">
        <title>Araport11: a complete reannotation of the Arabidopsis thaliana reference genome.</title>
        <authorList>
            <person name="Cheng C.Y."/>
            <person name="Krishnakumar V."/>
            <person name="Chan A.P."/>
            <person name="Thibaud-Nissen F."/>
            <person name="Schobel S."/>
            <person name="Town C.D."/>
        </authorList>
    </citation>
    <scope>GENOME REANNOTATION</scope>
    <source>
        <strain>cv. Columbia</strain>
    </source>
</reference>
<reference key="3">
    <citation type="journal article" date="2003" name="Science">
        <title>Empirical analysis of transcriptional activity in the Arabidopsis genome.</title>
        <authorList>
            <person name="Yamada K."/>
            <person name="Lim J."/>
            <person name="Dale J.M."/>
            <person name="Chen H."/>
            <person name="Shinn P."/>
            <person name="Palm C.J."/>
            <person name="Southwick A.M."/>
            <person name="Wu H.C."/>
            <person name="Kim C.J."/>
            <person name="Nguyen M."/>
            <person name="Pham P.K."/>
            <person name="Cheuk R.F."/>
            <person name="Karlin-Newmann G."/>
            <person name="Liu S.X."/>
            <person name="Lam B."/>
            <person name="Sakano H."/>
            <person name="Wu T."/>
            <person name="Yu G."/>
            <person name="Miranda M."/>
            <person name="Quach H.L."/>
            <person name="Tripp M."/>
            <person name="Chang C.H."/>
            <person name="Lee J.M."/>
            <person name="Toriumi M.J."/>
            <person name="Chan M.M."/>
            <person name="Tang C.C."/>
            <person name="Onodera C.S."/>
            <person name="Deng J.M."/>
            <person name="Akiyama K."/>
            <person name="Ansari Y."/>
            <person name="Arakawa T."/>
            <person name="Banh J."/>
            <person name="Banno F."/>
            <person name="Bowser L."/>
            <person name="Brooks S.Y."/>
            <person name="Carninci P."/>
            <person name="Chao Q."/>
            <person name="Choy N."/>
            <person name="Enju A."/>
            <person name="Goldsmith A.D."/>
            <person name="Gurjal M."/>
            <person name="Hansen N.F."/>
            <person name="Hayashizaki Y."/>
            <person name="Johnson-Hopson C."/>
            <person name="Hsuan V.W."/>
            <person name="Iida K."/>
            <person name="Karnes M."/>
            <person name="Khan S."/>
            <person name="Koesema E."/>
            <person name="Ishida J."/>
            <person name="Jiang P.X."/>
            <person name="Jones T."/>
            <person name="Kawai J."/>
            <person name="Kamiya A."/>
            <person name="Meyers C."/>
            <person name="Nakajima M."/>
            <person name="Narusaka M."/>
            <person name="Seki M."/>
            <person name="Sakurai T."/>
            <person name="Satou M."/>
            <person name="Tamse R."/>
            <person name="Vaysberg M."/>
            <person name="Wallender E.K."/>
            <person name="Wong C."/>
            <person name="Yamamura Y."/>
            <person name="Yuan S."/>
            <person name="Shinozaki K."/>
            <person name="Davis R.W."/>
            <person name="Theologis A."/>
            <person name="Ecker J.R."/>
        </authorList>
    </citation>
    <scope>NUCLEOTIDE SEQUENCE [LARGE SCALE MRNA] (ISOFORM 2)</scope>
    <source>
        <strain>cv. Columbia</strain>
    </source>
</reference>
<reference key="4">
    <citation type="submission" date="2005-01" db="EMBL/GenBank/DDBJ databases">
        <title>Arabidopsis ORF clones.</title>
        <authorList>
            <person name="Shinn P."/>
            <person name="Chen H."/>
            <person name="Cheuk R.F."/>
            <person name="Kim C.J."/>
            <person name="Ecker J.R."/>
        </authorList>
    </citation>
    <scope>NUCLEOTIDE SEQUENCE [LARGE SCALE MRNA] (ISOFORM 1)</scope>
    <source>
        <strain>cv. Columbia</strain>
    </source>
</reference>
<reference key="5">
    <citation type="journal article" date="2001" name="J. Biol. Chem.">
        <title>Phylogenetic analysis of the UDP-glycosyltransferase multigene family of Arabidopsis thaliana.</title>
        <authorList>
            <person name="Li Y."/>
            <person name="Baldauf S."/>
            <person name="Lim E.K."/>
            <person name="Bowles D.J."/>
        </authorList>
    </citation>
    <scope>GENE FAMILY</scope>
</reference>
<dbReference type="EC" id="2.4.1.-"/>
<dbReference type="EMBL" id="AL161515">
    <property type="protein sequence ID" value="CAB78073.1"/>
    <property type="molecule type" value="Genomic_DNA"/>
</dbReference>
<dbReference type="EMBL" id="CP002687">
    <property type="protein sequence ID" value="AEE82757.1"/>
    <property type="molecule type" value="Genomic_DNA"/>
</dbReference>
<dbReference type="EMBL" id="CP002687">
    <property type="protein sequence ID" value="AEE82758.1"/>
    <property type="molecule type" value="Genomic_DNA"/>
</dbReference>
<dbReference type="EMBL" id="BT003993">
    <property type="protein sequence ID" value="AAO42032.1"/>
    <property type="molecule type" value="mRNA"/>
</dbReference>
<dbReference type="EMBL" id="BT020532">
    <property type="protein sequence ID" value="AAW52558.1"/>
    <property type="molecule type" value="mRNA"/>
</dbReference>
<dbReference type="PIR" id="H85096">
    <property type="entry name" value="H85096"/>
</dbReference>
<dbReference type="RefSeq" id="NP_192688.2">
    <molecule id="Q9M0P3-2"/>
    <property type="nucleotide sequence ID" value="NM_117018.4"/>
</dbReference>
<dbReference type="RefSeq" id="NP_974524.1">
    <molecule id="Q9M0P3-1"/>
    <property type="nucleotide sequence ID" value="NM_202795.2"/>
</dbReference>
<dbReference type="SMR" id="Q9M0P3"/>
<dbReference type="FunCoup" id="Q9M0P3">
    <property type="interactions" value="25"/>
</dbReference>
<dbReference type="STRING" id="3702.Q9M0P3"/>
<dbReference type="CAZy" id="GT1">
    <property type="family name" value="Glycosyltransferase Family 1"/>
</dbReference>
<dbReference type="PaxDb" id="3702-AT4G09500.2"/>
<dbReference type="ProteomicsDB" id="243234">
    <molecule id="Q9M0P3-1"/>
</dbReference>
<dbReference type="DNASU" id="826534"/>
<dbReference type="EnsemblPlants" id="AT4G09500.1">
    <molecule id="Q9M0P3-2"/>
    <property type="protein sequence ID" value="AT4G09500.1"/>
    <property type="gene ID" value="AT4G09500"/>
</dbReference>
<dbReference type="EnsemblPlants" id="AT4G09500.2">
    <molecule id="Q9M0P3-1"/>
    <property type="protein sequence ID" value="AT4G09500.2"/>
    <property type="gene ID" value="AT4G09500"/>
</dbReference>
<dbReference type="GeneID" id="826534"/>
<dbReference type="Gramene" id="AT4G09500.1">
    <molecule id="Q9M0P3-2"/>
    <property type="protein sequence ID" value="AT4G09500.1"/>
    <property type="gene ID" value="AT4G09500"/>
</dbReference>
<dbReference type="Gramene" id="AT4G09500.2">
    <molecule id="Q9M0P3-1"/>
    <property type="protein sequence ID" value="AT4G09500.2"/>
    <property type="gene ID" value="AT4G09500"/>
</dbReference>
<dbReference type="KEGG" id="ath:AT4G09500"/>
<dbReference type="Araport" id="AT4G09500"/>
<dbReference type="TAIR" id="AT4G09500"/>
<dbReference type="eggNOG" id="KOG1192">
    <property type="taxonomic scope" value="Eukaryota"/>
</dbReference>
<dbReference type="InParanoid" id="Q9M0P3"/>
<dbReference type="OMA" id="MNKPDDV"/>
<dbReference type="PhylomeDB" id="Q9M0P3"/>
<dbReference type="BioCyc" id="ARA:AT4G09500-MONOMER"/>
<dbReference type="PRO" id="PR:Q9M0P3"/>
<dbReference type="Proteomes" id="UP000006548">
    <property type="component" value="Chromosome 4"/>
</dbReference>
<dbReference type="ExpressionAtlas" id="Q9M0P3">
    <property type="expression patterns" value="baseline and differential"/>
</dbReference>
<dbReference type="GO" id="GO:0035251">
    <property type="term" value="F:UDP-glucosyltransferase activity"/>
    <property type="evidence" value="ECO:0007669"/>
    <property type="project" value="InterPro"/>
</dbReference>
<dbReference type="CDD" id="cd03784">
    <property type="entry name" value="GT1_Gtf-like"/>
    <property type="match status" value="1"/>
</dbReference>
<dbReference type="FunFam" id="3.40.50.2000:FF:000037">
    <property type="entry name" value="Glycosyltransferase"/>
    <property type="match status" value="1"/>
</dbReference>
<dbReference type="FunFam" id="3.40.50.2000:FF:000087">
    <property type="entry name" value="Glycosyltransferase"/>
    <property type="match status" value="1"/>
</dbReference>
<dbReference type="Gene3D" id="3.40.50.2000">
    <property type="entry name" value="Glycogen Phosphorylase B"/>
    <property type="match status" value="2"/>
</dbReference>
<dbReference type="InterPro" id="IPR050481">
    <property type="entry name" value="UDP-glycosyltransf_plant"/>
</dbReference>
<dbReference type="InterPro" id="IPR002213">
    <property type="entry name" value="UDP_glucos_trans"/>
</dbReference>
<dbReference type="PANTHER" id="PTHR48049">
    <property type="entry name" value="GLYCOSYLTRANSFERASE"/>
    <property type="match status" value="1"/>
</dbReference>
<dbReference type="PANTHER" id="PTHR48049:SF91">
    <property type="entry name" value="UDP-GLYCOSYLTRANSFERASE 79B7-RELATED"/>
    <property type="match status" value="1"/>
</dbReference>
<dbReference type="Pfam" id="PF00201">
    <property type="entry name" value="UDPGT"/>
    <property type="match status" value="1"/>
</dbReference>
<dbReference type="SUPFAM" id="SSF53756">
    <property type="entry name" value="UDP-Glycosyltransferase/glycogen phosphorylase"/>
    <property type="match status" value="1"/>
</dbReference>
<accession>Q9M0P3</accession>
<accession>Q84WC5</accession>
<organism>
    <name type="scientific">Arabidopsis thaliana</name>
    <name type="common">Mouse-ear cress</name>
    <dbReference type="NCBI Taxonomy" id="3702"/>
    <lineage>
        <taxon>Eukaryota</taxon>
        <taxon>Viridiplantae</taxon>
        <taxon>Streptophyta</taxon>
        <taxon>Embryophyta</taxon>
        <taxon>Tracheophyta</taxon>
        <taxon>Spermatophyta</taxon>
        <taxon>Magnoliopsida</taxon>
        <taxon>eudicotyledons</taxon>
        <taxon>Gunneridae</taxon>
        <taxon>Pentapetalae</taxon>
        <taxon>rosids</taxon>
        <taxon>malvids</taxon>
        <taxon>Brassicales</taxon>
        <taxon>Brassicaceae</taxon>
        <taxon>Camelineae</taxon>
        <taxon>Arabidopsis</taxon>
    </lineage>
</organism>
<protein>
    <recommendedName>
        <fullName>UDP-glycosyltransferase 79B7</fullName>
        <ecNumber>2.4.1.-</ecNumber>
    </recommendedName>
</protein>
<proteinExistence type="evidence at transcript level"/>
<sequence>MEPKFHAFMFPWFAFGHMIPFLHLANKLAEKGHRVTFLLPKKAQKQLEHHNLFPDSIVFHPLTVPPVNGLPAGAETTSDIPISLDNLLSKALDLTRDQVEAAVRALRPDLIFFDFAQWIPDMAKEHMIKSVSYIIVSATTIAHTHVPGGKLGVRPPGYPSSKVMFRENDVHALATLSIFYKRLYHQITTGLKSCDVIALRTCKEVEGMFCDFISRQYHKKVLLTGPMFPEPDTSKPLEERWNHFLSGFAPKSVVFCSPGSQVILEKDQFQELCLGMELTGLPFLLAVKPPRGSSTVQEGLPEGFEERVKDRGVVWGGWVQQPLILAHPSIGCFVNHCGPGTIWESLVSDCQMVLIPFLSDQVLFTRLMTEEFEVSVEVPREKTGWFSKESLSNAIKSVMDKDSDIGKLVRSNHTKLKEILVSPGLLTGYVDHFVEGLQENLI</sequence>
<feature type="chain" id="PRO_0000409113" description="UDP-glycosyltransferase 79B7">
    <location>
        <begin position="1"/>
        <end position="442"/>
    </location>
</feature>
<feature type="binding site" evidence="1">
    <location>
        <position position="260"/>
    </location>
    <ligand>
        <name>UDP-alpha-D-glucose</name>
        <dbReference type="ChEBI" id="CHEBI:58885"/>
    </ligand>
</feature>
<feature type="binding site" evidence="1">
    <location>
        <begin position="319"/>
        <end position="321"/>
    </location>
    <ligand>
        <name>UDP-alpha-D-glucose</name>
        <dbReference type="ChEBI" id="CHEBI:58885"/>
    </ligand>
</feature>
<feature type="binding site" evidence="1">
    <location>
        <begin position="336"/>
        <end position="344"/>
    </location>
    <ligand>
        <name>UDP-alpha-D-glucose</name>
        <dbReference type="ChEBI" id="CHEBI:58885"/>
    </ligand>
</feature>
<feature type="binding site" evidence="1">
    <location>
        <begin position="358"/>
        <end position="361"/>
    </location>
    <ligand>
        <name>UDP-alpha-D-glucose</name>
        <dbReference type="ChEBI" id="CHEBI:58885"/>
    </ligand>
</feature>
<feature type="splice variant" id="VSP_041228" description="In isoform 2." evidence="2">
    <location>
        <begin position="207"/>
        <end position="231"/>
    </location>
</feature>
<feature type="sequence conflict" description="In Ref. 3; AAO42032." evidence="3" ref="3">
    <original>E</original>
    <variation>K</variation>
    <location>
        <position position="381"/>
    </location>
</feature>